<dbReference type="EMBL" id="X03475">
    <property type="protein sequence ID" value="CAA27193.1"/>
    <property type="molecule type" value="mRNA"/>
</dbReference>
<dbReference type="EMBL" id="BC061557">
    <property type="protein sequence ID" value="AAH61557.1"/>
    <property type="molecule type" value="mRNA"/>
</dbReference>
<dbReference type="PIR" id="A25404">
    <property type="entry name" value="R5RT5A"/>
</dbReference>
<dbReference type="RefSeq" id="NP_067087.1">
    <property type="nucleotide sequence ID" value="NM_021264.4"/>
</dbReference>
<dbReference type="RefSeq" id="XP_002727941.1">
    <property type="nucleotide sequence ID" value="XM_002727895.7"/>
</dbReference>
<dbReference type="RefSeq" id="XP_002727942.1">
    <property type="nucleotide sequence ID" value="XM_002727896.5"/>
</dbReference>
<dbReference type="RefSeq" id="XP_003752544.1">
    <property type="nucleotide sequence ID" value="XM_003752496.4"/>
</dbReference>
<dbReference type="RefSeq" id="XP_003752545.1">
    <property type="nucleotide sequence ID" value="XM_003752497.4"/>
</dbReference>
<dbReference type="RefSeq" id="XP_017445766.1">
    <property type="nucleotide sequence ID" value="XM_017590277.1"/>
</dbReference>
<dbReference type="RefSeq" id="XP_017453659.1">
    <property type="nucleotide sequence ID" value="XM_017598170.1"/>
</dbReference>
<dbReference type="RefSeq" id="XP_017453972.1">
    <property type="nucleotide sequence ID" value="XM_017598483.1"/>
</dbReference>
<dbReference type="RefSeq" id="XP_017459744.1">
    <property type="nucleotide sequence ID" value="XM_017604255.1"/>
</dbReference>
<dbReference type="RefSeq" id="XP_017459850.1">
    <property type="nucleotide sequence ID" value="XM_017604361.1"/>
</dbReference>
<dbReference type="RefSeq" id="XP_063126803.1">
    <property type="nucleotide sequence ID" value="XM_063270733.1"/>
</dbReference>
<dbReference type="RefSeq" id="XP_063126804.1">
    <property type="nucleotide sequence ID" value="XM_063270734.1"/>
</dbReference>
<dbReference type="RefSeq" id="XP_063126805.1">
    <property type="nucleotide sequence ID" value="XM_063270735.1"/>
</dbReference>
<dbReference type="PDB" id="7QGG">
    <property type="method" value="EM"/>
    <property type="resolution" value="2.86 A"/>
    <property type="chains" value="g=1-110"/>
</dbReference>
<dbReference type="PDBsum" id="7QGG"/>
<dbReference type="EMDB" id="EMD-13954"/>
<dbReference type="SMR" id="P04646"/>
<dbReference type="FunCoup" id="P04646">
    <property type="interactions" value="1701"/>
</dbReference>
<dbReference type="IntAct" id="P04646">
    <property type="interactions" value="3"/>
</dbReference>
<dbReference type="STRING" id="10116.ENSRNOP00000039099"/>
<dbReference type="GlyGen" id="P04646">
    <property type="glycosylation" value="1 site"/>
</dbReference>
<dbReference type="iPTMnet" id="P04646"/>
<dbReference type="PhosphoSitePlus" id="P04646"/>
<dbReference type="jPOST" id="P04646"/>
<dbReference type="PaxDb" id="10116-ENSRNOP00000039099"/>
<dbReference type="Ensembl" id="ENSRNOT00000117103.1">
    <property type="protein sequence ID" value="ENSRNOP00000092003.1"/>
    <property type="gene ID" value="ENSRNOG00000069961.1"/>
</dbReference>
<dbReference type="GeneID" id="57809"/>
<dbReference type="KEGG" id="rno:103690996"/>
<dbReference type="KEGG" id="rno:57809"/>
<dbReference type="UCSC" id="RGD:628793">
    <property type="organism name" value="rat"/>
</dbReference>
<dbReference type="AGR" id="RGD:2323795"/>
<dbReference type="AGR" id="RGD:9247033"/>
<dbReference type="CTD" id="103690996"/>
<dbReference type="CTD" id="6165"/>
<dbReference type="RGD" id="628793">
    <property type="gene designation" value="Rpl35a"/>
</dbReference>
<dbReference type="VEuPathDB" id="HostDB:ENSRNOG00000031641"/>
<dbReference type="VEuPathDB" id="HostDB:ENSRNOG00000032348"/>
<dbReference type="VEuPathDB" id="HostDB:ENSRNOG00000065971"/>
<dbReference type="VEuPathDB" id="HostDB:ENSRNOG00000070978"/>
<dbReference type="eggNOG" id="KOG0887">
    <property type="taxonomic scope" value="Eukaryota"/>
</dbReference>
<dbReference type="GeneTree" id="ENSGT00390000016972"/>
<dbReference type="HOGENOM" id="CLU_100745_5_0_1"/>
<dbReference type="InParanoid" id="P04646"/>
<dbReference type="OMA" id="RSAWHIT"/>
<dbReference type="OrthoDB" id="1166329at2759"/>
<dbReference type="PhylomeDB" id="P04646"/>
<dbReference type="TreeFam" id="TF300104"/>
<dbReference type="PRO" id="PR:P04646"/>
<dbReference type="Proteomes" id="UP000002494">
    <property type="component" value="Chromosome 12"/>
</dbReference>
<dbReference type="Bgee" id="ENSRNOG00000031641">
    <property type="expression patterns" value="Expressed in skeletal muscle tissue and 8 other cell types or tissues"/>
</dbReference>
<dbReference type="GO" id="GO:0022625">
    <property type="term" value="C:cytosolic large ribosomal subunit"/>
    <property type="evidence" value="ECO:0000318"/>
    <property type="project" value="GO_Central"/>
</dbReference>
<dbReference type="GO" id="GO:0003735">
    <property type="term" value="F:structural constituent of ribosome"/>
    <property type="evidence" value="ECO:0000318"/>
    <property type="project" value="GO_Central"/>
</dbReference>
<dbReference type="GO" id="GO:0000049">
    <property type="term" value="F:tRNA binding"/>
    <property type="evidence" value="ECO:0007669"/>
    <property type="project" value="UniProtKB-KW"/>
</dbReference>
<dbReference type="GO" id="GO:0002181">
    <property type="term" value="P:cytoplasmic translation"/>
    <property type="evidence" value="ECO:0000318"/>
    <property type="project" value="GO_Central"/>
</dbReference>
<dbReference type="GO" id="GO:0042273">
    <property type="term" value="P:ribosomal large subunit biogenesis"/>
    <property type="evidence" value="ECO:0000318"/>
    <property type="project" value="GO_Central"/>
</dbReference>
<dbReference type="FunFam" id="2.40.10.190:FF:000005">
    <property type="entry name" value="60S ribosomal protein L35a"/>
    <property type="match status" value="1"/>
</dbReference>
<dbReference type="Gene3D" id="2.40.10.190">
    <property type="entry name" value="translation elongation factor selb, chain A, domain 4"/>
    <property type="match status" value="1"/>
</dbReference>
<dbReference type="HAMAP" id="MF_00573">
    <property type="entry name" value="Ribosomal_eL33"/>
    <property type="match status" value="1"/>
</dbReference>
<dbReference type="InterPro" id="IPR001780">
    <property type="entry name" value="Ribosomal_eL33"/>
</dbReference>
<dbReference type="InterPro" id="IPR018266">
    <property type="entry name" value="Ribosomal_eL33_CS"/>
</dbReference>
<dbReference type="InterPro" id="IPR038661">
    <property type="entry name" value="Ribosomal_eL33_sf"/>
</dbReference>
<dbReference type="InterPro" id="IPR009000">
    <property type="entry name" value="Transl_B-barrel_sf"/>
</dbReference>
<dbReference type="PANTHER" id="PTHR10902">
    <property type="entry name" value="60S RIBOSOMAL PROTEIN L35A"/>
    <property type="match status" value="1"/>
</dbReference>
<dbReference type="Pfam" id="PF01247">
    <property type="entry name" value="Ribosomal_L35Ae"/>
    <property type="match status" value="1"/>
</dbReference>
<dbReference type="SUPFAM" id="SSF50447">
    <property type="entry name" value="Translation proteins"/>
    <property type="match status" value="1"/>
</dbReference>
<dbReference type="PROSITE" id="PS01105">
    <property type="entry name" value="RIBOSOMAL_L35AE"/>
    <property type="match status" value="1"/>
</dbReference>
<feature type="chain" id="PRO_0000192800" description="Large ribosomal subunit protein eL33">
    <location>
        <begin position="1"/>
        <end position="110"/>
    </location>
</feature>
<feature type="modified residue" description="N6-acetyllysine" evidence="2">
    <location>
        <position position="8"/>
    </location>
</feature>
<feature type="modified residue" description="N6-acetyllysine; alternate" evidence="1">
    <location>
        <position position="63"/>
    </location>
</feature>
<feature type="modified residue" description="N6-succinyllysine; alternate" evidence="1">
    <location>
        <position position="63"/>
    </location>
</feature>
<reference key="1">
    <citation type="journal article" date="1986" name="Eur. J. Biochem.">
        <title>Nucleotide sequence of cloned cDNA specific for rat ribosomal protein L35a.</title>
        <authorList>
            <person name="Tanaka T."/>
            <person name="Wakasugi K."/>
            <person name="Kuwano Y."/>
            <person name="Ishikawa K."/>
            <person name="Ogata K."/>
        </authorList>
    </citation>
    <scope>NUCLEOTIDE SEQUENCE [MRNA]</scope>
</reference>
<reference key="2">
    <citation type="journal article" date="2004" name="Genome Res.">
        <title>The status, quality, and expansion of the NIH full-length cDNA project: the Mammalian Gene Collection (MGC).</title>
        <authorList>
            <consortium name="The MGC Project Team"/>
        </authorList>
    </citation>
    <scope>NUCLEOTIDE SEQUENCE [LARGE SCALE MRNA]</scope>
    <source>
        <tissue>Pituitary</tissue>
    </source>
</reference>
<protein>
    <recommendedName>
        <fullName evidence="3">Large ribosomal subunit protein eL33</fullName>
    </recommendedName>
    <alternativeName>
        <fullName>60S ribosomal protein L35a</fullName>
    </alternativeName>
</protein>
<keyword id="KW-0002">3D-structure</keyword>
<keyword id="KW-0007">Acetylation</keyword>
<keyword id="KW-0963">Cytoplasm</keyword>
<keyword id="KW-1185">Reference proteome</keyword>
<keyword id="KW-0687">Ribonucleoprotein</keyword>
<keyword id="KW-0689">Ribosomal protein</keyword>
<keyword id="KW-0694">RNA-binding</keyword>
<keyword id="KW-0820">tRNA-binding</keyword>
<organism>
    <name type="scientific">Rattus norvegicus</name>
    <name type="common">Rat</name>
    <dbReference type="NCBI Taxonomy" id="10116"/>
    <lineage>
        <taxon>Eukaryota</taxon>
        <taxon>Metazoa</taxon>
        <taxon>Chordata</taxon>
        <taxon>Craniata</taxon>
        <taxon>Vertebrata</taxon>
        <taxon>Euteleostomi</taxon>
        <taxon>Mammalia</taxon>
        <taxon>Eutheria</taxon>
        <taxon>Euarchontoglires</taxon>
        <taxon>Glires</taxon>
        <taxon>Rodentia</taxon>
        <taxon>Myomorpha</taxon>
        <taxon>Muroidea</taxon>
        <taxon>Muridae</taxon>
        <taxon>Murinae</taxon>
        <taxon>Rattus</taxon>
    </lineage>
</organism>
<name>RL35A_RAT</name>
<accession>P04646</accession>
<evidence type="ECO:0000250" key="1">
    <source>
        <dbReference type="UniProtKB" id="O55142"/>
    </source>
</evidence>
<evidence type="ECO:0000250" key="2">
    <source>
        <dbReference type="UniProtKB" id="P18077"/>
    </source>
</evidence>
<evidence type="ECO:0000305" key="3"/>
<sequence>MSGRLWCKAIFAGYKRGLRNQREHTALLKIEGVYARDETEFYLGKRCAYVYKAKNNTVTPGGKPNKTRVIWGKVTRAHGNSGMVRAKFRSNLPAKAIGHRIRVMLYPSRI</sequence>
<comment type="function">
    <text evidence="2">Component of the large ribosomal subunit. The ribosome is a large ribonucleoprotein complex responsible for the synthesis of proteins in the cell. Required for the proliferation and viability of hematopoietic cells.</text>
</comment>
<comment type="subunit">
    <text evidence="2">Component of the large ribosomal subunit.</text>
</comment>
<comment type="subcellular location">
    <subcellularLocation>
        <location evidence="2">Cytoplasm</location>
    </subcellularLocation>
</comment>
<comment type="similarity">
    <text evidence="3">Belongs to the eukaryotic ribosomal protein eL33 family.</text>
</comment>
<gene>
    <name type="primary">Rpl35a</name>
</gene>
<proteinExistence type="evidence at protein level"/>